<comment type="function">
    <text evidence="1">Catalyzes the reversible interconversion of serine and glycine with tetrahydrofolate (THF) serving as the one-carbon carrier. This reaction serves as the major source of one-carbon groups required for the biosynthesis of purines, thymidylate, methionine, and other important biomolecules. Also exhibits THF-independent aldolase activity toward beta-hydroxyamino acids, producing glycine and aldehydes, via a retro-aldol mechanism.</text>
</comment>
<comment type="catalytic activity">
    <reaction evidence="1">
        <text>(6R)-5,10-methylene-5,6,7,8-tetrahydrofolate + glycine + H2O = (6S)-5,6,7,8-tetrahydrofolate + L-serine</text>
        <dbReference type="Rhea" id="RHEA:15481"/>
        <dbReference type="ChEBI" id="CHEBI:15377"/>
        <dbReference type="ChEBI" id="CHEBI:15636"/>
        <dbReference type="ChEBI" id="CHEBI:33384"/>
        <dbReference type="ChEBI" id="CHEBI:57305"/>
        <dbReference type="ChEBI" id="CHEBI:57453"/>
        <dbReference type="EC" id="2.1.2.1"/>
    </reaction>
</comment>
<comment type="cofactor">
    <cofactor evidence="1">
        <name>pyridoxal 5'-phosphate</name>
        <dbReference type="ChEBI" id="CHEBI:597326"/>
    </cofactor>
</comment>
<comment type="pathway">
    <text evidence="1">One-carbon metabolism; tetrahydrofolate interconversion.</text>
</comment>
<comment type="pathway">
    <text evidence="1">Amino-acid biosynthesis; glycine biosynthesis; glycine from L-serine: step 1/1.</text>
</comment>
<comment type="subunit">
    <text evidence="1">Homodimer.</text>
</comment>
<comment type="subcellular location">
    <subcellularLocation>
        <location evidence="1">Cytoplasm</location>
    </subcellularLocation>
</comment>
<comment type="similarity">
    <text evidence="1">Belongs to the SHMT family.</text>
</comment>
<proteinExistence type="inferred from homology"/>
<keyword id="KW-0028">Amino-acid biosynthesis</keyword>
<keyword id="KW-0963">Cytoplasm</keyword>
<keyword id="KW-0554">One-carbon metabolism</keyword>
<keyword id="KW-0663">Pyridoxal phosphate</keyword>
<keyword id="KW-0808">Transferase</keyword>
<reference key="1">
    <citation type="journal article" date="2008" name="PLoS ONE">
        <title>Environmental adaptation: genomic analysis of the piezotolerant and psychrotolerant deep-sea iron reducing bacterium Shewanella piezotolerans WP3.</title>
        <authorList>
            <person name="Wang F."/>
            <person name="Wang J."/>
            <person name="Jian H."/>
            <person name="Zhang B."/>
            <person name="Li S."/>
            <person name="Wang F."/>
            <person name="Zeng X."/>
            <person name="Gao L."/>
            <person name="Bartlett D.H."/>
            <person name="Yu J."/>
            <person name="Hu S."/>
            <person name="Xiao X."/>
        </authorList>
    </citation>
    <scope>NUCLEOTIDE SEQUENCE [LARGE SCALE GENOMIC DNA]</scope>
    <source>
        <strain>WP3 / JCM 13877</strain>
    </source>
</reference>
<sequence>MLKKDMNIADYDPQLFAAIEDETRRQEEHIELIASENYTSPRVIEAQGTQLTNKYAEGYPGKRYYGGCEHVDIVEELAISRAKELFGATYANVQPHSGSQANAAVFMALLEGGDTVLGMSLAHGGHLTHGSHVSFSGKLYNAVQYGIDESTGKIDYAEVERLAVEHKPKMIIAGFSAYSGIVDWGKFREIADKVGAYLFVDMAHVAGLVAAGIYPNPLPHAHVVTTTTHKTLAGPRGGLILSAIDDEAIYKKLNSAVFPGGQGGPLMHVIAAKAVAFKEALDPEFTTYQEQVVVNAKAMARTFIERGYDVVSGGTDNHLFLLDLISKDMTGKDADAALGNANITVNKNSVPNDPRSPFVTSGLRIGSPAITRRGFGEQESVLLTNWMCDVLDDISDLAVSERVKAQVLELCAKFPVYG</sequence>
<accession>B8CJM7</accession>
<protein>
    <recommendedName>
        <fullName evidence="1">Serine hydroxymethyltransferase</fullName>
        <shortName evidence="1">SHMT</shortName>
        <shortName evidence="1">Serine methylase</shortName>
        <ecNumber evidence="1">2.1.2.1</ecNumber>
    </recommendedName>
</protein>
<dbReference type="EC" id="2.1.2.1" evidence="1"/>
<dbReference type="EMBL" id="CP000472">
    <property type="protein sequence ID" value="ACJ28124.1"/>
    <property type="molecule type" value="Genomic_DNA"/>
</dbReference>
<dbReference type="RefSeq" id="WP_020911502.1">
    <property type="nucleotide sequence ID" value="NC_011566.1"/>
</dbReference>
<dbReference type="SMR" id="B8CJM7"/>
<dbReference type="STRING" id="225849.swp_1337"/>
<dbReference type="KEGG" id="swp:swp_1337"/>
<dbReference type="eggNOG" id="COG0112">
    <property type="taxonomic scope" value="Bacteria"/>
</dbReference>
<dbReference type="HOGENOM" id="CLU_022477_2_1_6"/>
<dbReference type="OrthoDB" id="9803846at2"/>
<dbReference type="UniPathway" id="UPA00193"/>
<dbReference type="UniPathway" id="UPA00288">
    <property type="reaction ID" value="UER01023"/>
</dbReference>
<dbReference type="Proteomes" id="UP000000753">
    <property type="component" value="Chromosome"/>
</dbReference>
<dbReference type="GO" id="GO:0005829">
    <property type="term" value="C:cytosol"/>
    <property type="evidence" value="ECO:0007669"/>
    <property type="project" value="TreeGrafter"/>
</dbReference>
<dbReference type="GO" id="GO:0004372">
    <property type="term" value="F:glycine hydroxymethyltransferase activity"/>
    <property type="evidence" value="ECO:0007669"/>
    <property type="project" value="UniProtKB-UniRule"/>
</dbReference>
<dbReference type="GO" id="GO:0030170">
    <property type="term" value="F:pyridoxal phosphate binding"/>
    <property type="evidence" value="ECO:0007669"/>
    <property type="project" value="UniProtKB-UniRule"/>
</dbReference>
<dbReference type="GO" id="GO:0019264">
    <property type="term" value="P:glycine biosynthetic process from serine"/>
    <property type="evidence" value="ECO:0007669"/>
    <property type="project" value="UniProtKB-UniRule"/>
</dbReference>
<dbReference type="GO" id="GO:0035999">
    <property type="term" value="P:tetrahydrofolate interconversion"/>
    <property type="evidence" value="ECO:0007669"/>
    <property type="project" value="UniProtKB-UniRule"/>
</dbReference>
<dbReference type="CDD" id="cd00378">
    <property type="entry name" value="SHMT"/>
    <property type="match status" value="1"/>
</dbReference>
<dbReference type="FunFam" id="3.40.640.10:FF:000001">
    <property type="entry name" value="Serine hydroxymethyltransferase"/>
    <property type="match status" value="1"/>
</dbReference>
<dbReference type="FunFam" id="3.90.1150.10:FF:000003">
    <property type="entry name" value="Serine hydroxymethyltransferase"/>
    <property type="match status" value="1"/>
</dbReference>
<dbReference type="Gene3D" id="3.90.1150.10">
    <property type="entry name" value="Aspartate Aminotransferase, domain 1"/>
    <property type="match status" value="1"/>
</dbReference>
<dbReference type="Gene3D" id="3.40.640.10">
    <property type="entry name" value="Type I PLP-dependent aspartate aminotransferase-like (Major domain)"/>
    <property type="match status" value="1"/>
</dbReference>
<dbReference type="HAMAP" id="MF_00051">
    <property type="entry name" value="SHMT"/>
    <property type="match status" value="1"/>
</dbReference>
<dbReference type="InterPro" id="IPR015424">
    <property type="entry name" value="PyrdxlP-dep_Trfase"/>
</dbReference>
<dbReference type="InterPro" id="IPR015421">
    <property type="entry name" value="PyrdxlP-dep_Trfase_major"/>
</dbReference>
<dbReference type="InterPro" id="IPR015422">
    <property type="entry name" value="PyrdxlP-dep_Trfase_small"/>
</dbReference>
<dbReference type="InterPro" id="IPR001085">
    <property type="entry name" value="Ser_HO-MeTrfase"/>
</dbReference>
<dbReference type="InterPro" id="IPR049943">
    <property type="entry name" value="Ser_HO-MeTrfase-like"/>
</dbReference>
<dbReference type="InterPro" id="IPR019798">
    <property type="entry name" value="Ser_HO-MeTrfase_PLP_BS"/>
</dbReference>
<dbReference type="InterPro" id="IPR039429">
    <property type="entry name" value="SHMT-like_dom"/>
</dbReference>
<dbReference type="NCBIfam" id="NF000586">
    <property type="entry name" value="PRK00011.1"/>
    <property type="match status" value="1"/>
</dbReference>
<dbReference type="PANTHER" id="PTHR11680">
    <property type="entry name" value="SERINE HYDROXYMETHYLTRANSFERASE"/>
    <property type="match status" value="1"/>
</dbReference>
<dbReference type="PANTHER" id="PTHR11680:SF50">
    <property type="entry name" value="SERINE HYDROXYMETHYLTRANSFERASE"/>
    <property type="match status" value="1"/>
</dbReference>
<dbReference type="Pfam" id="PF00464">
    <property type="entry name" value="SHMT"/>
    <property type="match status" value="1"/>
</dbReference>
<dbReference type="PIRSF" id="PIRSF000412">
    <property type="entry name" value="SHMT"/>
    <property type="match status" value="1"/>
</dbReference>
<dbReference type="SUPFAM" id="SSF53383">
    <property type="entry name" value="PLP-dependent transferases"/>
    <property type="match status" value="1"/>
</dbReference>
<dbReference type="PROSITE" id="PS00096">
    <property type="entry name" value="SHMT"/>
    <property type="match status" value="1"/>
</dbReference>
<evidence type="ECO:0000255" key="1">
    <source>
        <dbReference type="HAMAP-Rule" id="MF_00051"/>
    </source>
</evidence>
<organism>
    <name type="scientific">Shewanella piezotolerans (strain WP3 / JCM 13877)</name>
    <dbReference type="NCBI Taxonomy" id="225849"/>
    <lineage>
        <taxon>Bacteria</taxon>
        <taxon>Pseudomonadati</taxon>
        <taxon>Pseudomonadota</taxon>
        <taxon>Gammaproteobacteria</taxon>
        <taxon>Alteromonadales</taxon>
        <taxon>Shewanellaceae</taxon>
        <taxon>Shewanella</taxon>
    </lineage>
</organism>
<gene>
    <name evidence="1" type="primary">glyA</name>
    <name type="ordered locus">swp_1337</name>
</gene>
<name>GLYA_SHEPW</name>
<feature type="chain" id="PRO_1000116835" description="Serine hydroxymethyltransferase">
    <location>
        <begin position="1"/>
        <end position="418"/>
    </location>
</feature>
<feature type="binding site" evidence="1">
    <location>
        <position position="121"/>
    </location>
    <ligand>
        <name>(6S)-5,6,7,8-tetrahydrofolate</name>
        <dbReference type="ChEBI" id="CHEBI:57453"/>
    </ligand>
</feature>
<feature type="binding site" evidence="1">
    <location>
        <begin position="125"/>
        <end position="127"/>
    </location>
    <ligand>
        <name>(6S)-5,6,7,8-tetrahydrofolate</name>
        <dbReference type="ChEBI" id="CHEBI:57453"/>
    </ligand>
</feature>
<feature type="binding site" evidence="1">
    <location>
        <begin position="356"/>
        <end position="358"/>
    </location>
    <ligand>
        <name>(6S)-5,6,7,8-tetrahydrofolate</name>
        <dbReference type="ChEBI" id="CHEBI:57453"/>
    </ligand>
</feature>
<feature type="site" description="Plays an important role in substrate specificity" evidence="1">
    <location>
        <position position="229"/>
    </location>
</feature>
<feature type="modified residue" description="N6-(pyridoxal phosphate)lysine" evidence="1">
    <location>
        <position position="230"/>
    </location>
</feature>